<proteinExistence type="inferred from homology"/>
<protein>
    <recommendedName>
        <fullName evidence="1">Transcription antitermination protein NusB</fullName>
    </recommendedName>
    <alternativeName>
        <fullName evidence="1">Antitermination factor NusB</fullName>
    </alternativeName>
</protein>
<organism>
    <name type="scientific">Nitrobacter hamburgensis (strain DSM 10229 / NCIMB 13809 / X14)</name>
    <dbReference type="NCBI Taxonomy" id="323097"/>
    <lineage>
        <taxon>Bacteria</taxon>
        <taxon>Pseudomonadati</taxon>
        <taxon>Pseudomonadota</taxon>
        <taxon>Alphaproteobacteria</taxon>
        <taxon>Hyphomicrobiales</taxon>
        <taxon>Nitrobacteraceae</taxon>
        <taxon>Nitrobacter</taxon>
    </lineage>
</organism>
<sequence length="160" mass="17864">MADIRQNIDKKANRRGAARLAAVQALYQMEIGGAGINDVFAEFESHWLGSEVEGDKYLPAEAAFFRDVVAGVVRDQARLDPLIDDALSRGWPLKRIDAILRAVLRAGSYELEHRKDVPARVVVSEYVDVAHAFIEKEEVGMVNAVLDQIARRFRAGEFAR</sequence>
<feature type="chain" id="PRO_0000265550" description="Transcription antitermination protein NusB">
    <location>
        <begin position="1"/>
        <end position="160"/>
    </location>
</feature>
<accession>Q1QMB4</accession>
<name>NUSB_NITHX</name>
<reference key="1">
    <citation type="submission" date="2006-03" db="EMBL/GenBank/DDBJ databases">
        <title>Complete sequence of chromosome of Nitrobacter hamburgensis X14.</title>
        <authorList>
            <consortium name="US DOE Joint Genome Institute"/>
            <person name="Copeland A."/>
            <person name="Lucas S."/>
            <person name="Lapidus A."/>
            <person name="Barry K."/>
            <person name="Detter J.C."/>
            <person name="Glavina del Rio T."/>
            <person name="Hammon N."/>
            <person name="Israni S."/>
            <person name="Dalin E."/>
            <person name="Tice H."/>
            <person name="Pitluck S."/>
            <person name="Chain P."/>
            <person name="Malfatti S."/>
            <person name="Shin M."/>
            <person name="Vergez L."/>
            <person name="Schmutz J."/>
            <person name="Larimer F."/>
            <person name="Land M."/>
            <person name="Hauser L."/>
            <person name="Kyrpides N."/>
            <person name="Ivanova N."/>
            <person name="Ward B."/>
            <person name="Arp D."/>
            <person name="Klotz M."/>
            <person name="Stein L."/>
            <person name="O'Mullan G."/>
            <person name="Starkenburg S."/>
            <person name="Sayavedra L."/>
            <person name="Poret-Peterson A.T."/>
            <person name="Gentry M.E."/>
            <person name="Bruce D."/>
            <person name="Richardson P."/>
        </authorList>
    </citation>
    <scope>NUCLEOTIDE SEQUENCE [LARGE SCALE GENOMIC DNA]</scope>
    <source>
        <strain>DSM 10229 / NCIMB 13809 / X14</strain>
    </source>
</reference>
<dbReference type="EMBL" id="CP000319">
    <property type="protein sequence ID" value="ABE62633.1"/>
    <property type="molecule type" value="Genomic_DNA"/>
</dbReference>
<dbReference type="RefSeq" id="WP_011510315.1">
    <property type="nucleotide sequence ID" value="NC_007964.1"/>
</dbReference>
<dbReference type="SMR" id="Q1QMB4"/>
<dbReference type="STRING" id="323097.Nham_1819"/>
<dbReference type="KEGG" id="nha:Nham_1819"/>
<dbReference type="eggNOG" id="COG0781">
    <property type="taxonomic scope" value="Bacteria"/>
</dbReference>
<dbReference type="HOGENOM" id="CLU_087843_4_0_5"/>
<dbReference type="OrthoDB" id="9797817at2"/>
<dbReference type="Proteomes" id="UP000001953">
    <property type="component" value="Chromosome"/>
</dbReference>
<dbReference type="GO" id="GO:0005829">
    <property type="term" value="C:cytosol"/>
    <property type="evidence" value="ECO:0007669"/>
    <property type="project" value="TreeGrafter"/>
</dbReference>
<dbReference type="GO" id="GO:0003723">
    <property type="term" value="F:RNA binding"/>
    <property type="evidence" value="ECO:0007669"/>
    <property type="project" value="UniProtKB-UniRule"/>
</dbReference>
<dbReference type="GO" id="GO:0006353">
    <property type="term" value="P:DNA-templated transcription termination"/>
    <property type="evidence" value="ECO:0007669"/>
    <property type="project" value="UniProtKB-UniRule"/>
</dbReference>
<dbReference type="GO" id="GO:0031564">
    <property type="term" value="P:transcription antitermination"/>
    <property type="evidence" value="ECO:0007669"/>
    <property type="project" value="UniProtKB-KW"/>
</dbReference>
<dbReference type="Gene3D" id="1.10.940.10">
    <property type="entry name" value="NusB-like"/>
    <property type="match status" value="1"/>
</dbReference>
<dbReference type="HAMAP" id="MF_00073">
    <property type="entry name" value="NusB"/>
    <property type="match status" value="1"/>
</dbReference>
<dbReference type="InterPro" id="IPR035926">
    <property type="entry name" value="NusB-like_sf"/>
</dbReference>
<dbReference type="InterPro" id="IPR011605">
    <property type="entry name" value="NusB_fam"/>
</dbReference>
<dbReference type="InterPro" id="IPR006027">
    <property type="entry name" value="NusB_RsmB_TIM44"/>
</dbReference>
<dbReference type="NCBIfam" id="TIGR01951">
    <property type="entry name" value="nusB"/>
    <property type="match status" value="1"/>
</dbReference>
<dbReference type="PANTHER" id="PTHR11078:SF3">
    <property type="entry name" value="ANTITERMINATION NUSB DOMAIN-CONTAINING PROTEIN"/>
    <property type="match status" value="1"/>
</dbReference>
<dbReference type="PANTHER" id="PTHR11078">
    <property type="entry name" value="N UTILIZATION SUBSTANCE PROTEIN B-RELATED"/>
    <property type="match status" value="1"/>
</dbReference>
<dbReference type="Pfam" id="PF01029">
    <property type="entry name" value="NusB"/>
    <property type="match status" value="1"/>
</dbReference>
<dbReference type="SUPFAM" id="SSF48013">
    <property type="entry name" value="NusB-like"/>
    <property type="match status" value="1"/>
</dbReference>
<evidence type="ECO:0000255" key="1">
    <source>
        <dbReference type="HAMAP-Rule" id="MF_00073"/>
    </source>
</evidence>
<keyword id="KW-1185">Reference proteome</keyword>
<keyword id="KW-0694">RNA-binding</keyword>
<keyword id="KW-0804">Transcription</keyword>
<keyword id="KW-0889">Transcription antitermination</keyword>
<keyword id="KW-0805">Transcription regulation</keyword>
<gene>
    <name evidence="1" type="primary">nusB</name>
    <name type="ordered locus">Nham_1819</name>
</gene>
<comment type="function">
    <text evidence="1">Involved in transcription antitermination. Required for transcription of ribosomal RNA (rRNA) genes. Binds specifically to the boxA antiterminator sequence of the ribosomal RNA (rrn) operons.</text>
</comment>
<comment type="similarity">
    <text evidence="1">Belongs to the NusB family.</text>
</comment>